<evidence type="ECO:0000255" key="1">
    <source>
        <dbReference type="HAMAP-Rule" id="MF_01373"/>
    </source>
</evidence>
<evidence type="ECO:0000305" key="2"/>
<comment type="subcellular location">
    <subcellularLocation>
        <location evidence="1">Cell membrane</location>
        <topology evidence="1">Lipid-anchor</topology>
    </subcellularLocation>
</comment>
<comment type="similarity">
    <text evidence="1">Belongs to the LpqB lipoprotein family.</text>
</comment>
<comment type="sequence caution" evidence="2">
    <conflict type="erroneous initiation">
        <sequence resource="EMBL-CDS" id="SIU01901"/>
    </conflict>
    <text>Truncated N-terminus.</text>
</comment>
<reference key="1">
    <citation type="journal article" date="2003" name="Proc. Natl. Acad. Sci. U.S.A.">
        <title>The complete genome sequence of Mycobacterium bovis.</title>
        <authorList>
            <person name="Garnier T."/>
            <person name="Eiglmeier K."/>
            <person name="Camus J.-C."/>
            <person name="Medina N."/>
            <person name="Mansoor H."/>
            <person name="Pryor M."/>
            <person name="Duthoy S."/>
            <person name="Grondin S."/>
            <person name="Lacroix C."/>
            <person name="Monsempe C."/>
            <person name="Simon S."/>
            <person name="Harris B."/>
            <person name="Atkin R."/>
            <person name="Doggett J."/>
            <person name="Mayes R."/>
            <person name="Keating L."/>
            <person name="Wheeler P.R."/>
            <person name="Parkhill J."/>
            <person name="Barrell B.G."/>
            <person name="Cole S.T."/>
            <person name="Gordon S.V."/>
            <person name="Hewinson R.G."/>
        </authorList>
    </citation>
    <scope>NUCLEOTIDE SEQUENCE [LARGE SCALE GENOMIC DNA]</scope>
    <source>
        <strain>ATCC BAA-935 / AF2122/97</strain>
    </source>
</reference>
<reference key="2">
    <citation type="journal article" date="2017" name="Genome Announc.">
        <title>Updated reference genome sequence and annotation of Mycobacterium bovis AF2122/97.</title>
        <authorList>
            <person name="Malone K.M."/>
            <person name="Farrell D."/>
            <person name="Stuber T.P."/>
            <person name="Schubert O.T."/>
            <person name="Aebersold R."/>
            <person name="Robbe-Austerman S."/>
            <person name="Gordon S.V."/>
        </authorList>
    </citation>
    <scope>NUCLEOTIDE SEQUENCE [LARGE SCALE GENOMIC DNA]</scope>
    <scope>GENOME REANNOTATION</scope>
    <source>
        <strain>ATCC BAA-935 / AF2122/97</strain>
    </source>
</reference>
<organism>
    <name type="scientific">Mycobacterium bovis (strain ATCC BAA-935 / AF2122/97)</name>
    <dbReference type="NCBI Taxonomy" id="233413"/>
    <lineage>
        <taxon>Bacteria</taxon>
        <taxon>Bacillati</taxon>
        <taxon>Actinomycetota</taxon>
        <taxon>Actinomycetes</taxon>
        <taxon>Mycobacteriales</taxon>
        <taxon>Mycobacteriaceae</taxon>
        <taxon>Mycobacterium</taxon>
        <taxon>Mycobacterium tuberculosis complex</taxon>
    </lineage>
</organism>
<protein>
    <recommendedName>
        <fullName evidence="1">Lipoprotein LpqB</fullName>
    </recommendedName>
</protein>
<sequence>MERLMRLTILLFLGAVLAGCASVPSTSAPQAIGTVERPVPSNLPKPSPGMDPDVLLREFLKATADPANRHLAARQFLTESASNAWDDAGSALLIDHVVFVETRSAEKVSVTMRADILGSLSDVGVFETAEGQLPDPGPIELVKTSGGWRIDRLPNGVFLDWQQFQETYKRNTLYFADPTGKTVVPDPRYVAVSDRDQLATELVSKLLAGPRPEMARTVRNLLAPPLRLRGPVTRADGGKSGIGRGYGGARVDMEKLSTTDPHSRQLLAAQIIWTLARADIRGPYVINADGAPLEDRFAEGWTTSDVAATDPGVADGAAAGLHALVNGSLVAMDAQRVTPVPGAFGRMPEQTAAAVSRSGRQVASVVTLGRGAPDEAASLWVGDLGGEAVQSADGHSLLRPSWSLDDAVWVVVDTNVVLRAIQDPASGQPARIPVDSTAVASRFPGAINDLQLSRDGTRAAMVIGGQVILAGVEQTQAGQFALTYPRRLGFGLGSSVVSLSWRTGDDIVVTRTDAAHPVSYVNLDGVNSDAPSRGLQTPLTAIAANPSTVYVAGPQGVLMYSASVESRPGWADVPGLMVPGAAPVLPG</sequence>
<feature type="signal peptide" evidence="1">
    <location>
        <begin position="1"/>
        <end position="19"/>
    </location>
</feature>
<feature type="chain" id="PRO_0000286718" description="Lipoprotein LpqB">
    <location>
        <begin position="20"/>
        <end position="587"/>
    </location>
</feature>
<feature type="lipid moiety-binding region" description="N-palmitoyl cysteine" evidence="1">
    <location>
        <position position="20"/>
    </location>
</feature>
<feature type="lipid moiety-binding region" description="S-diacylglycerol cysteine" evidence="1">
    <location>
        <position position="20"/>
    </location>
</feature>
<accession>Q7TWW9</accession>
<accession>A0A1R3Y3J4</accession>
<accession>X2BMY9</accession>
<name>LPQB_MYCBO</name>
<gene>
    <name evidence="1" type="primary">lpqB</name>
    <name type="ordered locus">BQ2027_MB3272C</name>
</gene>
<dbReference type="EMBL" id="LT708304">
    <property type="protein sequence ID" value="SIU01901.1"/>
    <property type="status" value="ALT_INIT"/>
    <property type="molecule type" value="Genomic_DNA"/>
</dbReference>
<dbReference type="RefSeq" id="NP_856917.1">
    <property type="nucleotide sequence ID" value="NC_002945.3"/>
</dbReference>
<dbReference type="SMR" id="Q7TWW9"/>
<dbReference type="KEGG" id="mbo:BQ2027_MB3272C"/>
<dbReference type="PATRIC" id="fig|233413.5.peg.3599"/>
<dbReference type="Proteomes" id="UP000001419">
    <property type="component" value="Chromosome"/>
</dbReference>
<dbReference type="GO" id="GO:0005886">
    <property type="term" value="C:plasma membrane"/>
    <property type="evidence" value="ECO:0007669"/>
    <property type="project" value="UniProtKB-SubCell"/>
</dbReference>
<dbReference type="HAMAP" id="MF_01373">
    <property type="entry name" value="LpqB_lipoprot"/>
    <property type="match status" value="1"/>
</dbReference>
<dbReference type="InterPro" id="IPR019606">
    <property type="entry name" value="GerMN"/>
</dbReference>
<dbReference type="InterPro" id="IPR023959">
    <property type="entry name" value="Lipoprotein_LpqB"/>
</dbReference>
<dbReference type="InterPro" id="IPR018910">
    <property type="entry name" value="Lipoprotein_LpqB_C"/>
</dbReference>
<dbReference type="NCBIfam" id="NF010141">
    <property type="entry name" value="PRK13616.1"/>
    <property type="match status" value="1"/>
</dbReference>
<dbReference type="Pfam" id="PF10646">
    <property type="entry name" value="Germane"/>
    <property type="match status" value="1"/>
</dbReference>
<dbReference type="Pfam" id="PF10647">
    <property type="entry name" value="Gmad1"/>
    <property type="match status" value="1"/>
</dbReference>
<dbReference type="SMART" id="SM00909">
    <property type="entry name" value="Germane"/>
    <property type="match status" value="1"/>
</dbReference>
<dbReference type="SUPFAM" id="SSF69304">
    <property type="entry name" value="Tricorn protease N-terminal domain"/>
    <property type="match status" value="1"/>
</dbReference>
<dbReference type="PROSITE" id="PS51257">
    <property type="entry name" value="PROKAR_LIPOPROTEIN"/>
    <property type="match status" value="1"/>
</dbReference>
<keyword id="KW-1003">Cell membrane</keyword>
<keyword id="KW-0449">Lipoprotein</keyword>
<keyword id="KW-0472">Membrane</keyword>
<keyword id="KW-0564">Palmitate</keyword>
<keyword id="KW-1185">Reference proteome</keyword>
<keyword id="KW-0732">Signal</keyword>
<proteinExistence type="inferred from homology"/>